<reference key="1">
    <citation type="journal article" date="2006" name="J. Bacteriol.">
        <title>Pathogenomic sequence analysis of Bacillus cereus and Bacillus thuringiensis isolates closely related to Bacillus anthracis.</title>
        <authorList>
            <person name="Han C.S."/>
            <person name="Xie G."/>
            <person name="Challacombe J.F."/>
            <person name="Altherr M.R."/>
            <person name="Bhotika S.S."/>
            <person name="Bruce D."/>
            <person name="Campbell C.S."/>
            <person name="Campbell M.L."/>
            <person name="Chen J."/>
            <person name="Chertkov O."/>
            <person name="Cleland C."/>
            <person name="Dimitrijevic M."/>
            <person name="Doggett N.A."/>
            <person name="Fawcett J.J."/>
            <person name="Glavina T."/>
            <person name="Goodwin L.A."/>
            <person name="Hill K.K."/>
            <person name="Hitchcock P."/>
            <person name="Jackson P.J."/>
            <person name="Keim P."/>
            <person name="Kewalramani A.R."/>
            <person name="Longmire J."/>
            <person name="Lucas S."/>
            <person name="Malfatti S."/>
            <person name="McMurry K."/>
            <person name="Meincke L.J."/>
            <person name="Misra M."/>
            <person name="Moseman B.L."/>
            <person name="Mundt M."/>
            <person name="Munk A.C."/>
            <person name="Okinaka R.T."/>
            <person name="Parson-Quintana B."/>
            <person name="Reilly L.P."/>
            <person name="Richardson P."/>
            <person name="Robinson D.L."/>
            <person name="Rubin E."/>
            <person name="Saunders E."/>
            <person name="Tapia R."/>
            <person name="Tesmer J.G."/>
            <person name="Thayer N."/>
            <person name="Thompson L.S."/>
            <person name="Tice H."/>
            <person name="Ticknor L.O."/>
            <person name="Wills P.L."/>
            <person name="Brettin T.S."/>
            <person name="Gilna P."/>
        </authorList>
    </citation>
    <scope>NUCLEOTIDE SEQUENCE [LARGE SCALE GENOMIC DNA]</scope>
    <source>
        <strain>ZK / E33L</strain>
    </source>
</reference>
<sequence>MKFTIMSKGDQSSDTLASTMKEYLLDFGFIMDEQEPDIVISVGGDGTLLYAFHRYYNRLDETAFVGVHTGHLGFYADWLPTEVEKLVIAIAKTPFQVVEYPLLEVIIRYMNGSKESQYLAMNEATVKSAEGTLVTEVEIRGEYFETFRGDGLCISTPSGSTAYNKALGGAIIHPSIEAIQIAEMASINNRVFRTVGSPLVLPKHHTCVLKPTAGMNLQITVDHLTMVHQDVKSIQYRVANEKVRFVRFRPFPFWKRVRDSFVADK</sequence>
<organism>
    <name type="scientific">Bacillus cereus (strain ZK / E33L)</name>
    <dbReference type="NCBI Taxonomy" id="288681"/>
    <lineage>
        <taxon>Bacteria</taxon>
        <taxon>Bacillati</taxon>
        <taxon>Bacillota</taxon>
        <taxon>Bacilli</taxon>
        <taxon>Bacillales</taxon>
        <taxon>Bacillaceae</taxon>
        <taxon>Bacillus</taxon>
        <taxon>Bacillus cereus group</taxon>
    </lineage>
</organism>
<dbReference type="EC" id="2.7.1.23" evidence="1"/>
<dbReference type="EMBL" id="CP000001">
    <property type="protein sequence ID" value="AAU19150.1"/>
    <property type="molecule type" value="Genomic_DNA"/>
</dbReference>
<dbReference type="RefSeq" id="WP_000673194.1">
    <property type="nucleotide sequence ID" value="NZ_CP009968.1"/>
</dbReference>
<dbReference type="SMR" id="Q63EG5"/>
<dbReference type="KEGG" id="bcz:BCE33L1096"/>
<dbReference type="PATRIC" id="fig|288681.22.peg.4467"/>
<dbReference type="Proteomes" id="UP000002612">
    <property type="component" value="Chromosome"/>
</dbReference>
<dbReference type="GO" id="GO:0005737">
    <property type="term" value="C:cytoplasm"/>
    <property type="evidence" value="ECO:0007669"/>
    <property type="project" value="UniProtKB-SubCell"/>
</dbReference>
<dbReference type="GO" id="GO:0005524">
    <property type="term" value="F:ATP binding"/>
    <property type="evidence" value="ECO:0007669"/>
    <property type="project" value="UniProtKB-KW"/>
</dbReference>
<dbReference type="GO" id="GO:0046872">
    <property type="term" value="F:metal ion binding"/>
    <property type="evidence" value="ECO:0007669"/>
    <property type="project" value="UniProtKB-UniRule"/>
</dbReference>
<dbReference type="GO" id="GO:0051287">
    <property type="term" value="F:NAD binding"/>
    <property type="evidence" value="ECO:0007669"/>
    <property type="project" value="UniProtKB-ARBA"/>
</dbReference>
<dbReference type="GO" id="GO:0003951">
    <property type="term" value="F:NAD+ kinase activity"/>
    <property type="evidence" value="ECO:0007669"/>
    <property type="project" value="UniProtKB-UniRule"/>
</dbReference>
<dbReference type="GO" id="GO:0019674">
    <property type="term" value="P:NAD metabolic process"/>
    <property type="evidence" value="ECO:0007669"/>
    <property type="project" value="InterPro"/>
</dbReference>
<dbReference type="GO" id="GO:0006741">
    <property type="term" value="P:NADP biosynthetic process"/>
    <property type="evidence" value="ECO:0007669"/>
    <property type="project" value="UniProtKB-UniRule"/>
</dbReference>
<dbReference type="FunFam" id="2.60.200.30:FF:000002">
    <property type="entry name" value="NAD kinase"/>
    <property type="match status" value="1"/>
</dbReference>
<dbReference type="Gene3D" id="3.40.50.10330">
    <property type="entry name" value="Probable inorganic polyphosphate/atp-NAD kinase, domain 1"/>
    <property type="match status" value="1"/>
</dbReference>
<dbReference type="Gene3D" id="2.60.200.30">
    <property type="entry name" value="Probable inorganic polyphosphate/atp-NAD kinase, domain 2"/>
    <property type="match status" value="1"/>
</dbReference>
<dbReference type="HAMAP" id="MF_00361">
    <property type="entry name" value="NAD_kinase"/>
    <property type="match status" value="1"/>
</dbReference>
<dbReference type="InterPro" id="IPR017438">
    <property type="entry name" value="ATP-NAD_kinase_N"/>
</dbReference>
<dbReference type="InterPro" id="IPR017437">
    <property type="entry name" value="ATP-NAD_kinase_PpnK-typ_C"/>
</dbReference>
<dbReference type="InterPro" id="IPR016064">
    <property type="entry name" value="NAD/diacylglycerol_kinase_sf"/>
</dbReference>
<dbReference type="InterPro" id="IPR002504">
    <property type="entry name" value="NADK"/>
</dbReference>
<dbReference type="NCBIfam" id="NF003424">
    <property type="entry name" value="PRK04885.1"/>
    <property type="match status" value="1"/>
</dbReference>
<dbReference type="PANTHER" id="PTHR20275">
    <property type="entry name" value="NAD KINASE"/>
    <property type="match status" value="1"/>
</dbReference>
<dbReference type="PANTHER" id="PTHR20275:SF0">
    <property type="entry name" value="NAD KINASE"/>
    <property type="match status" value="1"/>
</dbReference>
<dbReference type="Pfam" id="PF01513">
    <property type="entry name" value="NAD_kinase"/>
    <property type="match status" value="1"/>
</dbReference>
<dbReference type="Pfam" id="PF20143">
    <property type="entry name" value="NAD_kinase_C"/>
    <property type="match status" value="1"/>
</dbReference>
<dbReference type="SUPFAM" id="SSF111331">
    <property type="entry name" value="NAD kinase/diacylglycerol kinase-like"/>
    <property type="match status" value="1"/>
</dbReference>
<name>NADK1_BACCZ</name>
<evidence type="ECO:0000255" key="1">
    <source>
        <dbReference type="HAMAP-Rule" id="MF_00361"/>
    </source>
</evidence>
<gene>
    <name evidence="1" type="primary">nadK1</name>
    <name type="ordered locus">BCE33L1096</name>
</gene>
<keyword id="KW-0067">ATP-binding</keyword>
<keyword id="KW-0963">Cytoplasm</keyword>
<keyword id="KW-0418">Kinase</keyword>
<keyword id="KW-0520">NAD</keyword>
<keyword id="KW-0521">NADP</keyword>
<keyword id="KW-0547">Nucleotide-binding</keyword>
<keyword id="KW-0808">Transferase</keyword>
<protein>
    <recommendedName>
        <fullName evidence="1">NAD kinase 1</fullName>
        <ecNumber evidence="1">2.7.1.23</ecNumber>
    </recommendedName>
    <alternativeName>
        <fullName evidence="1">ATP-dependent NAD kinase 1</fullName>
    </alternativeName>
</protein>
<proteinExistence type="inferred from homology"/>
<comment type="function">
    <text evidence="1">Involved in the regulation of the intracellular balance of NAD and NADP, and is a key enzyme in the biosynthesis of NADP. Catalyzes specifically the phosphorylation on 2'-hydroxyl of the adenosine moiety of NAD to yield NADP.</text>
</comment>
<comment type="catalytic activity">
    <reaction evidence="1">
        <text>NAD(+) + ATP = ADP + NADP(+) + H(+)</text>
        <dbReference type="Rhea" id="RHEA:18629"/>
        <dbReference type="ChEBI" id="CHEBI:15378"/>
        <dbReference type="ChEBI" id="CHEBI:30616"/>
        <dbReference type="ChEBI" id="CHEBI:57540"/>
        <dbReference type="ChEBI" id="CHEBI:58349"/>
        <dbReference type="ChEBI" id="CHEBI:456216"/>
        <dbReference type="EC" id="2.7.1.23"/>
    </reaction>
</comment>
<comment type="cofactor">
    <cofactor evidence="1">
        <name>a divalent metal cation</name>
        <dbReference type="ChEBI" id="CHEBI:60240"/>
    </cofactor>
</comment>
<comment type="subcellular location">
    <subcellularLocation>
        <location evidence="1">Cytoplasm</location>
    </subcellularLocation>
</comment>
<comment type="similarity">
    <text evidence="1">Belongs to the NAD kinase family.</text>
</comment>
<accession>Q63EG5</accession>
<feature type="chain" id="PRO_0000229601" description="NAD kinase 1">
    <location>
        <begin position="1"/>
        <end position="265"/>
    </location>
</feature>
<feature type="active site" description="Proton acceptor" evidence="1">
    <location>
        <position position="45"/>
    </location>
</feature>
<feature type="binding site" evidence="1">
    <location>
        <begin position="45"/>
        <end position="46"/>
    </location>
    <ligand>
        <name>NAD(+)</name>
        <dbReference type="ChEBI" id="CHEBI:57540"/>
    </ligand>
</feature>
<feature type="binding site" evidence="1">
    <location>
        <begin position="122"/>
        <end position="123"/>
    </location>
    <ligand>
        <name>NAD(+)</name>
        <dbReference type="ChEBI" id="CHEBI:57540"/>
    </ligand>
</feature>
<feature type="binding site" evidence="1">
    <location>
        <position position="148"/>
    </location>
    <ligand>
        <name>NAD(+)</name>
        <dbReference type="ChEBI" id="CHEBI:57540"/>
    </ligand>
</feature>
<feature type="binding site" evidence="1">
    <location>
        <position position="150"/>
    </location>
    <ligand>
        <name>NAD(+)</name>
        <dbReference type="ChEBI" id="CHEBI:57540"/>
    </ligand>
</feature>
<feature type="binding site" evidence="1">
    <location>
        <position position="185"/>
    </location>
    <ligand>
        <name>NAD(+)</name>
        <dbReference type="ChEBI" id="CHEBI:57540"/>
    </ligand>
</feature>